<feature type="signal peptide" evidence="1">
    <location>
        <begin position="1"/>
        <end position="24"/>
    </location>
</feature>
<feature type="chain" id="PRO_0000236297" description="Flagellar P-ring protein 2">
    <location>
        <begin position="25"/>
        <end position="369"/>
    </location>
</feature>
<dbReference type="EMBL" id="CP000085">
    <property type="protein sequence ID" value="ABC36282.1"/>
    <property type="status" value="ALT_INIT"/>
    <property type="molecule type" value="Genomic_DNA"/>
</dbReference>
<dbReference type="SMR" id="Q2T8V6"/>
<dbReference type="KEGG" id="bte:BTH_II0191"/>
<dbReference type="HOGENOM" id="CLU_045235_1_0_4"/>
<dbReference type="Proteomes" id="UP000001930">
    <property type="component" value="Chromosome II"/>
</dbReference>
<dbReference type="GO" id="GO:0009428">
    <property type="term" value="C:bacterial-type flagellum basal body, distal rod, P ring"/>
    <property type="evidence" value="ECO:0007669"/>
    <property type="project" value="InterPro"/>
</dbReference>
<dbReference type="GO" id="GO:0030288">
    <property type="term" value="C:outer membrane-bounded periplasmic space"/>
    <property type="evidence" value="ECO:0007669"/>
    <property type="project" value="InterPro"/>
</dbReference>
<dbReference type="GO" id="GO:0005198">
    <property type="term" value="F:structural molecule activity"/>
    <property type="evidence" value="ECO:0007669"/>
    <property type="project" value="InterPro"/>
</dbReference>
<dbReference type="GO" id="GO:0071973">
    <property type="term" value="P:bacterial-type flagellum-dependent cell motility"/>
    <property type="evidence" value="ECO:0007669"/>
    <property type="project" value="InterPro"/>
</dbReference>
<dbReference type="HAMAP" id="MF_00416">
    <property type="entry name" value="FlgI"/>
    <property type="match status" value="1"/>
</dbReference>
<dbReference type="InterPro" id="IPR001782">
    <property type="entry name" value="Flag_FlgI"/>
</dbReference>
<dbReference type="NCBIfam" id="NF003676">
    <property type="entry name" value="PRK05303.1"/>
    <property type="match status" value="1"/>
</dbReference>
<dbReference type="PANTHER" id="PTHR30381">
    <property type="entry name" value="FLAGELLAR P-RING PERIPLASMIC PROTEIN FLGI"/>
    <property type="match status" value="1"/>
</dbReference>
<dbReference type="PANTHER" id="PTHR30381:SF0">
    <property type="entry name" value="FLAGELLAR P-RING PROTEIN"/>
    <property type="match status" value="1"/>
</dbReference>
<dbReference type="Pfam" id="PF02119">
    <property type="entry name" value="FlgI"/>
    <property type="match status" value="1"/>
</dbReference>
<dbReference type="PRINTS" id="PR01010">
    <property type="entry name" value="FLGPRINGFLGI"/>
</dbReference>
<protein>
    <recommendedName>
        <fullName evidence="1">Flagellar P-ring protein 2</fullName>
    </recommendedName>
    <alternativeName>
        <fullName evidence="1">Basal body P-ring protein 2</fullName>
    </alternativeName>
</protein>
<name>FLGI2_BURTA</name>
<keyword id="KW-0975">Bacterial flagellum</keyword>
<keyword id="KW-0574">Periplasm</keyword>
<keyword id="KW-0732">Signal</keyword>
<reference key="1">
    <citation type="journal article" date="2005" name="BMC Genomics">
        <title>Bacterial genome adaptation to niches: divergence of the potential virulence genes in three Burkholderia species of different survival strategies.</title>
        <authorList>
            <person name="Kim H.S."/>
            <person name="Schell M.A."/>
            <person name="Yu Y."/>
            <person name="Ulrich R.L."/>
            <person name="Sarria S.H."/>
            <person name="Nierman W.C."/>
            <person name="DeShazer D."/>
        </authorList>
    </citation>
    <scope>NUCLEOTIDE SEQUENCE [LARGE SCALE GENOMIC DNA]</scope>
    <source>
        <strain>ATCC 700388 / DSM 13276 / CCUG 48851 / CIP 106301 / E264</strain>
    </source>
</reference>
<comment type="function">
    <text evidence="1">Assembles around the rod to form the L-ring and probably protects the motor/basal body from shearing forces during rotation.</text>
</comment>
<comment type="subunit">
    <text evidence="1">The basal body constitutes a major portion of the flagellar organelle and consists of four rings (L,P,S, and M) mounted on a central rod.</text>
</comment>
<comment type="subcellular location">
    <subcellularLocation>
        <location evidence="1">Periplasm</location>
    </subcellularLocation>
    <subcellularLocation>
        <location evidence="1">Bacterial flagellum basal body</location>
    </subcellularLocation>
</comment>
<comment type="similarity">
    <text evidence="1">Belongs to the FlgI family.</text>
</comment>
<comment type="sequence caution" evidence="2">
    <conflict type="erroneous initiation">
        <sequence resource="EMBL-CDS" id="ABC36282"/>
    </conflict>
</comment>
<accession>Q2T8V6</accession>
<proteinExistence type="inferred from homology"/>
<evidence type="ECO:0000255" key="1">
    <source>
        <dbReference type="HAMAP-Rule" id="MF_00416"/>
    </source>
</evidence>
<evidence type="ECO:0000305" key="2"/>
<sequence>MCAFAAILSLLSVLLMATSRSSDAAPLGTLVSVEGVRDNQLVGYGLVVGLNGSGDGQQIRYTGQSIANVLKQFGVTLPEGIRLRSRNVAAVMVSANFPAGYVPGQKIDVTVSSMGDAKSLRGGTLLLTPLRAADGVVYALAQGNLVVPGVSAQGRSGSSVTINATAAGRIPQGATIEQEIPSDLDAKPSVRLSLKRPSFQTATSIVAAIDRMAGPGAATSRDGTSVEVRAPEDPTARVAFLAKLTAINVTPQKEPPRVVFNSRTGTVVISQGMTVSPAAVSHGTLKVTISEGAIVSQPNPLGGGKTAVVPLSQVDVQQDGNRMFNWPAGVSLQKIVDTINSTGASPDDVMAILQALDEAGALNGELVVI</sequence>
<gene>
    <name evidence="1" type="primary">flgI2</name>
    <name type="ordered locus">BTH_II0191</name>
</gene>
<organism>
    <name type="scientific">Burkholderia thailandensis (strain ATCC 700388 / DSM 13276 / CCUG 48851 / CIP 106301 / E264)</name>
    <dbReference type="NCBI Taxonomy" id="271848"/>
    <lineage>
        <taxon>Bacteria</taxon>
        <taxon>Pseudomonadati</taxon>
        <taxon>Pseudomonadota</taxon>
        <taxon>Betaproteobacteria</taxon>
        <taxon>Burkholderiales</taxon>
        <taxon>Burkholderiaceae</taxon>
        <taxon>Burkholderia</taxon>
        <taxon>pseudomallei group</taxon>
    </lineage>
</organism>